<comment type="function">
    <text evidence="1">Cleaves the N-terminal amino acid of tripeptides.</text>
</comment>
<comment type="catalytic activity">
    <reaction evidence="1">
        <text>Release of the N-terminal residue from a tripeptide.</text>
        <dbReference type="EC" id="3.4.11.4"/>
    </reaction>
</comment>
<comment type="cofactor">
    <cofactor evidence="1">
        <name>Zn(2+)</name>
        <dbReference type="ChEBI" id="CHEBI:29105"/>
    </cofactor>
    <text evidence="1">Binds 2 Zn(2+) ions per subunit.</text>
</comment>
<comment type="subcellular location">
    <subcellularLocation>
        <location evidence="1">Cytoplasm</location>
    </subcellularLocation>
</comment>
<comment type="similarity">
    <text evidence="1">Belongs to the peptidase M20B family.</text>
</comment>
<sequence>MKDVLERFLGYIKVDTQSSEESDTVPTTKTQLEFAKKLGEELKAIGLKDVSVDESGYVMATLESNIDKKVPAIGFIAHMDTSPDLSGTNINPRIVEKYDGQDIVLNKEKNIVLKINEFPEILEYKGQDIVVTDGNTLLGADDKAGIAEIITAMEYLINHPEIKHGTIKVGFTPDEEVGKGADHFDVKKFGADLAYTLDGGGIGELECETFNAAKAKVIIEGRNVHPGSAKNKMTNAVLVANKFINMLPENEVPERTEGYEGFFHLLSVKSEVETAELNYIIRDFDRKKFEERKEQIKEVGKKINEEYNKEIVCVKVEDQYYNMKEKIDEVKYVVDIAYDAMKAIDIEPILVPIRGGTDGSRLSFMGLPTPNLFAGGHNFHGRFEFVPVLSMEKAAELVVKIAELYANR</sequence>
<protein>
    <recommendedName>
        <fullName evidence="1">Peptidase T</fullName>
        <ecNumber evidence="1">3.4.11.4</ecNumber>
    </recommendedName>
    <alternativeName>
        <fullName evidence="1">Aminotripeptidase</fullName>
        <shortName evidence="1">Tripeptidase</shortName>
    </alternativeName>
    <alternativeName>
        <fullName evidence="1">Tripeptide aminopeptidase</fullName>
    </alternativeName>
</protein>
<proteinExistence type="inferred from homology"/>
<name>PEPT_CLOBL</name>
<gene>
    <name evidence="1" type="primary">pepT</name>
    <name type="ordered locus">CLI_0524</name>
</gene>
<accession>A7GAK0</accession>
<organism>
    <name type="scientific">Clostridium botulinum (strain Langeland / NCTC 10281 / Type F)</name>
    <dbReference type="NCBI Taxonomy" id="441772"/>
    <lineage>
        <taxon>Bacteria</taxon>
        <taxon>Bacillati</taxon>
        <taxon>Bacillota</taxon>
        <taxon>Clostridia</taxon>
        <taxon>Eubacteriales</taxon>
        <taxon>Clostridiaceae</taxon>
        <taxon>Clostridium</taxon>
    </lineage>
</organism>
<keyword id="KW-0031">Aminopeptidase</keyword>
<keyword id="KW-0963">Cytoplasm</keyword>
<keyword id="KW-0378">Hydrolase</keyword>
<keyword id="KW-0479">Metal-binding</keyword>
<keyword id="KW-0482">Metalloprotease</keyword>
<keyword id="KW-0645">Protease</keyword>
<keyword id="KW-0862">Zinc</keyword>
<evidence type="ECO:0000255" key="1">
    <source>
        <dbReference type="HAMAP-Rule" id="MF_00550"/>
    </source>
</evidence>
<reference key="1">
    <citation type="submission" date="2007-06" db="EMBL/GenBank/DDBJ databases">
        <authorList>
            <person name="Brinkac L.M."/>
            <person name="Daugherty S."/>
            <person name="Dodson R.J."/>
            <person name="Madupu R."/>
            <person name="Brown J.L."/>
            <person name="Bruce D."/>
            <person name="Detter C."/>
            <person name="Munk C."/>
            <person name="Smith L.A."/>
            <person name="Smith T.J."/>
            <person name="White O."/>
            <person name="Brettin T.S."/>
        </authorList>
    </citation>
    <scope>NUCLEOTIDE SEQUENCE [LARGE SCALE GENOMIC DNA]</scope>
    <source>
        <strain>Langeland / NCTC 10281 / Type F</strain>
    </source>
</reference>
<dbReference type="EC" id="3.4.11.4" evidence="1"/>
<dbReference type="EMBL" id="CP000728">
    <property type="protein sequence ID" value="ABS41192.1"/>
    <property type="molecule type" value="Genomic_DNA"/>
</dbReference>
<dbReference type="RefSeq" id="WP_011987451.1">
    <property type="nucleotide sequence ID" value="NC_009699.1"/>
</dbReference>
<dbReference type="SMR" id="A7GAK0"/>
<dbReference type="MEROPS" id="M20.003"/>
<dbReference type="KEGG" id="cbf:CLI_0524"/>
<dbReference type="HOGENOM" id="CLU_053676_0_0_9"/>
<dbReference type="Proteomes" id="UP000002410">
    <property type="component" value="Chromosome"/>
</dbReference>
<dbReference type="GO" id="GO:0005829">
    <property type="term" value="C:cytosol"/>
    <property type="evidence" value="ECO:0007669"/>
    <property type="project" value="TreeGrafter"/>
</dbReference>
<dbReference type="GO" id="GO:0008237">
    <property type="term" value="F:metallopeptidase activity"/>
    <property type="evidence" value="ECO:0007669"/>
    <property type="project" value="UniProtKB-KW"/>
</dbReference>
<dbReference type="GO" id="GO:0045148">
    <property type="term" value="F:tripeptide aminopeptidase activity"/>
    <property type="evidence" value="ECO:0007669"/>
    <property type="project" value="UniProtKB-UniRule"/>
</dbReference>
<dbReference type="GO" id="GO:0008270">
    <property type="term" value="F:zinc ion binding"/>
    <property type="evidence" value="ECO:0007669"/>
    <property type="project" value="UniProtKB-UniRule"/>
</dbReference>
<dbReference type="GO" id="GO:0043171">
    <property type="term" value="P:peptide catabolic process"/>
    <property type="evidence" value="ECO:0007669"/>
    <property type="project" value="UniProtKB-UniRule"/>
</dbReference>
<dbReference type="GO" id="GO:0006508">
    <property type="term" value="P:proteolysis"/>
    <property type="evidence" value="ECO:0007669"/>
    <property type="project" value="UniProtKB-UniRule"/>
</dbReference>
<dbReference type="CDD" id="cd03892">
    <property type="entry name" value="M20_peptT"/>
    <property type="match status" value="1"/>
</dbReference>
<dbReference type="FunFam" id="3.30.70.360:FF:000002">
    <property type="entry name" value="Peptidase T"/>
    <property type="match status" value="1"/>
</dbReference>
<dbReference type="Gene3D" id="3.30.70.360">
    <property type="match status" value="1"/>
</dbReference>
<dbReference type="Gene3D" id="3.40.630.10">
    <property type="entry name" value="Zn peptidases"/>
    <property type="match status" value="1"/>
</dbReference>
<dbReference type="HAMAP" id="MF_00550">
    <property type="entry name" value="Aminopeptidase_M20"/>
    <property type="match status" value="1"/>
</dbReference>
<dbReference type="InterPro" id="IPR001261">
    <property type="entry name" value="ArgE/DapE_CS"/>
</dbReference>
<dbReference type="InterPro" id="IPR036264">
    <property type="entry name" value="Bact_exopeptidase_dim_dom"/>
</dbReference>
<dbReference type="InterPro" id="IPR002933">
    <property type="entry name" value="Peptidase_M20"/>
</dbReference>
<dbReference type="InterPro" id="IPR011650">
    <property type="entry name" value="Peptidase_M20_dimer"/>
</dbReference>
<dbReference type="InterPro" id="IPR010161">
    <property type="entry name" value="Peptidase_M20B"/>
</dbReference>
<dbReference type="NCBIfam" id="TIGR01882">
    <property type="entry name" value="peptidase-T"/>
    <property type="match status" value="1"/>
</dbReference>
<dbReference type="NCBIfam" id="NF003976">
    <property type="entry name" value="PRK05469.1"/>
    <property type="match status" value="1"/>
</dbReference>
<dbReference type="NCBIfam" id="NF009920">
    <property type="entry name" value="PRK13381.1"/>
    <property type="match status" value="1"/>
</dbReference>
<dbReference type="PANTHER" id="PTHR42994">
    <property type="entry name" value="PEPTIDASE T"/>
    <property type="match status" value="1"/>
</dbReference>
<dbReference type="PANTHER" id="PTHR42994:SF1">
    <property type="entry name" value="PEPTIDASE T"/>
    <property type="match status" value="1"/>
</dbReference>
<dbReference type="Pfam" id="PF07687">
    <property type="entry name" value="M20_dimer"/>
    <property type="match status" value="1"/>
</dbReference>
<dbReference type="Pfam" id="PF01546">
    <property type="entry name" value="Peptidase_M20"/>
    <property type="match status" value="1"/>
</dbReference>
<dbReference type="PIRSF" id="PIRSF037215">
    <property type="entry name" value="Peptidase_M20B"/>
    <property type="match status" value="1"/>
</dbReference>
<dbReference type="SUPFAM" id="SSF55031">
    <property type="entry name" value="Bacterial exopeptidase dimerisation domain"/>
    <property type="match status" value="1"/>
</dbReference>
<dbReference type="SUPFAM" id="SSF53187">
    <property type="entry name" value="Zn-dependent exopeptidases"/>
    <property type="match status" value="1"/>
</dbReference>
<dbReference type="PROSITE" id="PS00758">
    <property type="entry name" value="ARGE_DAPE_CPG2_1"/>
    <property type="match status" value="1"/>
</dbReference>
<dbReference type="PROSITE" id="PS00759">
    <property type="entry name" value="ARGE_DAPE_CPG2_2"/>
    <property type="match status" value="1"/>
</dbReference>
<feature type="chain" id="PRO_1000017842" description="Peptidase T">
    <location>
        <begin position="1"/>
        <end position="408"/>
    </location>
</feature>
<feature type="active site" evidence="1">
    <location>
        <position position="80"/>
    </location>
</feature>
<feature type="active site" description="Proton acceptor" evidence="1">
    <location>
        <position position="175"/>
    </location>
</feature>
<feature type="binding site" evidence="1">
    <location>
        <position position="78"/>
    </location>
    <ligand>
        <name>Zn(2+)</name>
        <dbReference type="ChEBI" id="CHEBI:29105"/>
        <label>1</label>
    </ligand>
</feature>
<feature type="binding site" evidence="1">
    <location>
        <position position="141"/>
    </location>
    <ligand>
        <name>Zn(2+)</name>
        <dbReference type="ChEBI" id="CHEBI:29105"/>
        <label>1</label>
    </ligand>
</feature>
<feature type="binding site" evidence="1">
    <location>
        <position position="141"/>
    </location>
    <ligand>
        <name>Zn(2+)</name>
        <dbReference type="ChEBI" id="CHEBI:29105"/>
        <label>2</label>
    </ligand>
</feature>
<feature type="binding site" evidence="1">
    <location>
        <position position="176"/>
    </location>
    <ligand>
        <name>Zn(2+)</name>
        <dbReference type="ChEBI" id="CHEBI:29105"/>
        <label>2</label>
    </ligand>
</feature>
<feature type="binding site" evidence="1">
    <location>
        <position position="198"/>
    </location>
    <ligand>
        <name>Zn(2+)</name>
        <dbReference type="ChEBI" id="CHEBI:29105"/>
        <label>1</label>
    </ligand>
</feature>
<feature type="binding site" evidence="1">
    <location>
        <position position="380"/>
    </location>
    <ligand>
        <name>Zn(2+)</name>
        <dbReference type="ChEBI" id="CHEBI:29105"/>
        <label>2</label>
    </ligand>
</feature>